<feature type="chain" id="PRO_0000241765" description="Small ribosomal subunit protein uS7">
    <location>
        <begin position="1"/>
        <end position="156"/>
    </location>
</feature>
<comment type="function">
    <text evidence="1">One of the primary rRNA binding proteins, it binds directly to 16S rRNA where it nucleates assembly of the head domain of the 30S subunit. Is located at the subunit interface close to the decoding center, probably blocks exit of the E-site tRNA.</text>
</comment>
<comment type="subunit">
    <text evidence="1">Part of the 30S ribosomal subunit. Contacts proteins S9 and S11.</text>
</comment>
<comment type="similarity">
    <text evidence="1">Belongs to the universal ribosomal protein uS7 family.</text>
</comment>
<organism>
    <name type="scientific">Novosphingobium aromaticivorans (strain ATCC 700278 / DSM 12444 / CCUG 56034 / CIP 105152 / NBRC 16084 / F199)</name>
    <dbReference type="NCBI Taxonomy" id="279238"/>
    <lineage>
        <taxon>Bacteria</taxon>
        <taxon>Pseudomonadati</taxon>
        <taxon>Pseudomonadota</taxon>
        <taxon>Alphaproteobacteria</taxon>
        <taxon>Sphingomonadales</taxon>
        <taxon>Sphingomonadaceae</taxon>
        <taxon>Novosphingobium</taxon>
    </lineage>
</organism>
<sequence length="156" mass="17810">MSRRRRPEKRVILPDPKFGDQVLSKFMNNLMLDGKKSVAESIVYGALEVMQTRAKADPVQLFHDALNNVRPQIEVRSRRVGGATYQVPVEVRPERAQALAIRWLITAARNRSETTMAARLSAELLDAANNRGNAVKKREDTHRMADANRAFSHYRW</sequence>
<accession>Q2G8Y4</accession>
<evidence type="ECO:0000255" key="1">
    <source>
        <dbReference type="HAMAP-Rule" id="MF_00480"/>
    </source>
</evidence>
<evidence type="ECO:0000305" key="2"/>
<keyword id="KW-1185">Reference proteome</keyword>
<keyword id="KW-0687">Ribonucleoprotein</keyword>
<keyword id="KW-0689">Ribosomal protein</keyword>
<keyword id="KW-0694">RNA-binding</keyword>
<keyword id="KW-0699">rRNA-binding</keyword>
<keyword id="KW-0820">tRNA-binding</keyword>
<protein>
    <recommendedName>
        <fullName evidence="1">Small ribosomal subunit protein uS7</fullName>
    </recommendedName>
    <alternativeName>
        <fullName evidence="2">30S ribosomal protein S7</fullName>
    </alternativeName>
</protein>
<dbReference type="EMBL" id="CP000248">
    <property type="protein sequence ID" value="ABD25689.1"/>
    <property type="molecule type" value="Genomic_DNA"/>
</dbReference>
<dbReference type="RefSeq" id="WP_011444903.1">
    <property type="nucleotide sequence ID" value="NC_007794.1"/>
</dbReference>
<dbReference type="SMR" id="Q2G8Y4"/>
<dbReference type="STRING" id="279238.Saro_1245"/>
<dbReference type="KEGG" id="nar:Saro_1245"/>
<dbReference type="eggNOG" id="COG0049">
    <property type="taxonomic scope" value="Bacteria"/>
</dbReference>
<dbReference type="HOGENOM" id="CLU_072226_1_1_5"/>
<dbReference type="Proteomes" id="UP000009134">
    <property type="component" value="Chromosome"/>
</dbReference>
<dbReference type="GO" id="GO:0015935">
    <property type="term" value="C:small ribosomal subunit"/>
    <property type="evidence" value="ECO:0007669"/>
    <property type="project" value="InterPro"/>
</dbReference>
<dbReference type="GO" id="GO:0019843">
    <property type="term" value="F:rRNA binding"/>
    <property type="evidence" value="ECO:0007669"/>
    <property type="project" value="UniProtKB-UniRule"/>
</dbReference>
<dbReference type="GO" id="GO:0003735">
    <property type="term" value="F:structural constituent of ribosome"/>
    <property type="evidence" value="ECO:0007669"/>
    <property type="project" value="InterPro"/>
</dbReference>
<dbReference type="GO" id="GO:0000049">
    <property type="term" value="F:tRNA binding"/>
    <property type="evidence" value="ECO:0007669"/>
    <property type="project" value="UniProtKB-UniRule"/>
</dbReference>
<dbReference type="GO" id="GO:0006412">
    <property type="term" value="P:translation"/>
    <property type="evidence" value="ECO:0007669"/>
    <property type="project" value="UniProtKB-UniRule"/>
</dbReference>
<dbReference type="CDD" id="cd14869">
    <property type="entry name" value="uS7_Bacteria"/>
    <property type="match status" value="1"/>
</dbReference>
<dbReference type="FunFam" id="1.10.455.10:FF:000001">
    <property type="entry name" value="30S ribosomal protein S7"/>
    <property type="match status" value="1"/>
</dbReference>
<dbReference type="Gene3D" id="1.10.455.10">
    <property type="entry name" value="Ribosomal protein S7 domain"/>
    <property type="match status" value="1"/>
</dbReference>
<dbReference type="HAMAP" id="MF_00480_B">
    <property type="entry name" value="Ribosomal_uS7_B"/>
    <property type="match status" value="1"/>
</dbReference>
<dbReference type="InterPro" id="IPR000235">
    <property type="entry name" value="Ribosomal_uS7"/>
</dbReference>
<dbReference type="InterPro" id="IPR005717">
    <property type="entry name" value="Ribosomal_uS7_bac/org-type"/>
</dbReference>
<dbReference type="InterPro" id="IPR020606">
    <property type="entry name" value="Ribosomal_uS7_CS"/>
</dbReference>
<dbReference type="InterPro" id="IPR023798">
    <property type="entry name" value="Ribosomal_uS7_dom"/>
</dbReference>
<dbReference type="InterPro" id="IPR036823">
    <property type="entry name" value="Ribosomal_uS7_dom_sf"/>
</dbReference>
<dbReference type="NCBIfam" id="TIGR01029">
    <property type="entry name" value="rpsG_bact"/>
    <property type="match status" value="1"/>
</dbReference>
<dbReference type="PANTHER" id="PTHR11205">
    <property type="entry name" value="RIBOSOMAL PROTEIN S7"/>
    <property type="match status" value="1"/>
</dbReference>
<dbReference type="Pfam" id="PF00177">
    <property type="entry name" value="Ribosomal_S7"/>
    <property type="match status" value="1"/>
</dbReference>
<dbReference type="PIRSF" id="PIRSF002122">
    <property type="entry name" value="RPS7p_RPS7a_RPS5e_RPS7o"/>
    <property type="match status" value="1"/>
</dbReference>
<dbReference type="SUPFAM" id="SSF47973">
    <property type="entry name" value="Ribosomal protein S7"/>
    <property type="match status" value="1"/>
</dbReference>
<dbReference type="PROSITE" id="PS00052">
    <property type="entry name" value="RIBOSOMAL_S7"/>
    <property type="match status" value="1"/>
</dbReference>
<proteinExistence type="inferred from homology"/>
<reference key="1">
    <citation type="submission" date="2006-01" db="EMBL/GenBank/DDBJ databases">
        <title>Complete sequence of Novosphingobium aromaticivorans DSM 12444.</title>
        <authorList>
            <consortium name="US DOE Joint Genome Institute"/>
            <person name="Copeland A."/>
            <person name="Lucas S."/>
            <person name="Lapidus A."/>
            <person name="Barry K."/>
            <person name="Detter J.C."/>
            <person name="Glavina T."/>
            <person name="Hammon N."/>
            <person name="Israni S."/>
            <person name="Pitluck S."/>
            <person name="Chain P."/>
            <person name="Malfatti S."/>
            <person name="Shin M."/>
            <person name="Vergez L."/>
            <person name="Schmutz J."/>
            <person name="Larimer F."/>
            <person name="Land M."/>
            <person name="Kyrpides N."/>
            <person name="Ivanova N."/>
            <person name="Fredrickson J."/>
            <person name="Balkwill D."/>
            <person name="Romine M.F."/>
            <person name="Richardson P."/>
        </authorList>
    </citation>
    <scope>NUCLEOTIDE SEQUENCE [LARGE SCALE GENOMIC DNA]</scope>
    <source>
        <strain>ATCC 700278 / DSM 12444 / CCUG 56034 / CIP 105152 / NBRC 16084 / F199</strain>
    </source>
</reference>
<name>RS7_NOVAD</name>
<gene>
    <name evidence="1" type="primary">rpsG</name>
    <name type="ordered locus">Saro_1245</name>
</gene>